<dbReference type="EMBL" id="DQ489736">
    <property type="protein sequence ID" value="ACA82401.1"/>
    <property type="molecule type" value="Genomic_DNA"/>
</dbReference>
<dbReference type="RefSeq" id="WP_004900365.1">
    <property type="nucleotide sequence ID" value="NC_010471.1"/>
</dbReference>
<dbReference type="SMR" id="B1MXZ9"/>
<dbReference type="STRING" id="349519.LCK_00568"/>
<dbReference type="GeneID" id="61187626"/>
<dbReference type="KEGG" id="lci:LCK_00568"/>
<dbReference type="eggNOG" id="COG0291">
    <property type="taxonomic scope" value="Bacteria"/>
</dbReference>
<dbReference type="HOGENOM" id="CLU_169643_3_1_9"/>
<dbReference type="OrthoDB" id="47476at2"/>
<dbReference type="Proteomes" id="UP000002166">
    <property type="component" value="Chromosome"/>
</dbReference>
<dbReference type="GO" id="GO:0022625">
    <property type="term" value="C:cytosolic large ribosomal subunit"/>
    <property type="evidence" value="ECO:0007669"/>
    <property type="project" value="TreeGrafter"/>
</dbReference>
<dbReference type="GO" id="GO:0003735">
    <property type="term" value="F:structural constituent of ribosome"/>
    <property type="evidence" value="ECO:0007669"/>
    <property type="project" value="InterPro"/>
</dbReference>
<dbReference type="GO" id="GO:0006412">
    <property type="term" value="P:translation"/>
    <property type="evidence" value="ECO:0007669"/>
    <property type="project" value="UniProtKB-UniRule"/>
</dbReference>
<dbReference type="FunFam" id="4.10.410.60:FF:000001">
    <property type="entry name" value="50S ribosomal protein L35"/>
    <property type="match status" value="1"/>
</dbReference>
<dbReference type="Gene3D" id="4.10.410.60">
    <property type="match status" value="1"/>
</dbReference>
<dbReference type="HAMAP" id="MF_00514">
    <property type="entry name" value="Ribosomal_bL35"/>
    <property type="match status" value="1"/>
</dbReference>
<dbReference type="InterPro" id="IPR001706">
    <property type="entry name" value="Ribosomal_bL35"/>
</dbReference>
<dbReference type="InterPro" id="IPR021137">
    <property type="entry name" value="Ribosomal_bL35-like"/>
</dbReference>
<dbReference type="InterPro" id="IPR018265">
    <property type="entry name" value="Ribosomal_bL35_CS"/>
</dbReference>
<dbReference type="InterPro" id="IPR037229">
    <property type="entry name" value="Ribosomal_bL35_sf"/>
</dbReference>
<dbReference type="NCBIfam" id="TIGR00001">
    <property type="entry name" value="rpmI_bact"/>
    <property type="match status" value="1"/>
</dbReference>
<dbReference type="PANTHER" id="PTHR33343">
    <property type="entry name" value="54S RIBOSOMAL PROTEIN BL35M"/>
    <property type="match status" value="1"/>
</dbReference>
<dbReference type="PANTHER" id="PTHR33343:SF1">
    <property type="entry name" value="LARGE RIBOSOMAL SUBUNIT PROTEIN BL35M"/>
    <property type="match status" value="1"/>
</dbReference>
<dbReference type="Pfam" id="PF01632">
    <property type="entry name" value="Ribosomal_L35p"/>
    <property type="match status" value="1"/>
</dbReference>
<dbReference type="PRINTS" id="PR00064">
    <property type="entry name" value="RIBOSOMALL35"/>
</dbReference>
<dbReference type="SUPFAM" id="SSF143034">
    <property type="entry name" value="L35p-like"/>
    <property type="match status" value="1"/>
</dbReference>
<dbReference type="PROSITE" id="PS00936">
    <property type="entry name" value="RIBOSOMAL_L35"/>
    <property type="match status" value="1"/>
</dbReference>
<reference key="1">
    <citation type="journal article" date="2008" name="J. Bacteriol.">
        <title>Complete genome sequence of Leuconostoc citreum KM20.</title>
        <authorList>
            <person name="Kim J.F."/>
            <person name="Jeong H."/>
            <person name="Lee J.-S."/>
            <person name="Choi S.-H."/>
            <person name="Ha M."/>
            <person name="Hur C.-G."/>
            <person name="Kim J.-S."/>
            <person name="Lee S."/>
            <person name="Park H.-S."/>
            <person name="Park Y.-H."/>
            <person name="Oh T.K."/>
        </authorList>
    </citation>
    <scope>NUCLEOTIDE SEQUENCE [LARGE SCALE GENOMIC DNA]</scope>
    <source>
        <strain>KM20</strain>
    </source>
</reference>
<sequence length="65" mass="7444">MPKMKTHRASAKRFKKTANGGLKSASAYTSHRFHGKTKKQRRQLRGTRMMDSTTVKTYAKMLSNI</sequence>
<feature type="chain" id="PRO_1000127372" description="Large ribosomal subunit protein bL35">
    <location>
        <begin position="1"/>
        <end position="65"/>
    </location>
</feature>
<feature type="region of interest" description="Disordered" evidence="2">
    <location>
        <begin position="1"/>
        <end position="47"/>
    </location>
</feature>
<feature type="compositionally biased region" description="Basic residues" evidence="2">
    <location>
        <begin position="1"/>
        <end position="16"/>
    </location>
</feature>
<feature type="compositionally biased region" description="Basic residues" evidence="2">
    <location>
        <begin position="31"/>
        <end position="45"/>
    </location>
</feature>
<organism>
    <name type="scientific">Leuconostoc citreum (strain KM20)</name>
    <dbReference type="NCBI Taxonomy" id="349519"/>
    <lineage>
        <taxon>Bacteria</taxon>
        <taxon>Bacillati</taxon>
        <taxon>Bacillota</taxon>
        <taxon>Bacilli</taxon>
        <taxon>Lactobacillales</taxon>
        <taxon>Lactobacillaceae</taxon>
        <taxon>Leuconostoc</taxon>
    </lineage>
</organism>
<accession>B1MXZ9</accession>
<proteinExistence type="inferred from homology"/>
<evidence type="ECO:0000255" key="1">
    <source>
        <dbReference type="HAMAP-Rule" id="MF_00514"/>
    </source>
</evidence>
<evidence type="ECO:0000256" key="2">
    <source>
        <dbReference type="SAM" id="MobiDB-lite"/>
    </source>
</evidence>
<evidence type="ECO:0000305" key="3"/>
<comment type="similarity">
    <text evidence="1">Belongs to the bacterial ribosomal protein bL35 family.</text>
</comment>
<name>RL35_LEUCK</name>
<protein>
    <recommendedName>
        <fullName evidence="1">Large ribosomal subunit protein bL35</fullName>
    </recommendedName>
    <alternativeName>
        <fullName evidence="3">50S ribosomal protein L35</fullName>
    </alternativeName>
</protein>
<keyword id="KW-1185">Reference proteome</keyword>
<keyword id="KW-0687">Ribonucleoprotein</keyword>
<keyword id="KW-0689">Ribosomal protein</keyword>
<gene>
    <name evidence="1" type="primary">rpmI</name>
    <name type="ordered locus">LCK_00568</name>
</gene>